<gene>
    <name evidence="1" type="primary">gpsA</name>
    <name type="ordered locus">Ecaj_0667</name>
</gene>
<protein>
    <recommendedName>
        <fullName evidence="1">Glycerol-3-phosphate dehydrogenase [NAD(P)+]</fullName>
        <ecNumber evidence="1">1.1.1.94</ecNumber>
    </recommendedName>
    <alternativeName>
        <fullName evidence="1">NAD(P)(+)-dependent glycerol-3-phosphate dehydrogenase</fullName>
    </alternativeName>
    <alternativeName>
        <fullName evidence="1">NAD(P)H-dependent dihydroxyacetone-phosphate reductase</fullName>
    </alternativeName>
</protein>
<dbReference type="EC" id="1.1.1.94" evidence="1"/>
<dbReference type="EMBL" id="CP000107">
    <property type="protein sequence ID" value="AAZ68699.1"/>
    <property type="molecule type" value="Genomic_DNA"/>
</dbReference>
<dbReference type="RefSeq" id="WP_011304776.1">
    <property type="nucleotide sequence ID" value="NC_007354.1"/>
</dbReference>
<dbReference type="SMR" id="Q3YRF6"/>
<dbReference type="FunCoup" id="Q3YRF6">
    <property type="interactions" value="294"/>
</dbReference>
<dbReference type="STRING" id="269484.Ecaj_0667"/>
<dbReference type="KEGG" id="ecn:Ecaj_0667"/>
<dbReference type="eggNOG" id="COG0240">
    <property type="taxonomic scope" value="Bacteria"/>
</dbReference>
<dbReference type="HOGENOM" id="CLU_033449_0_0_5"/>
<dbReference type="InParanoid" id="Q3YRF6"/>
<dbReference type="UniPathway" id="UPA00940"/>
<dbReference type="Proteomes" id="UP000000435">
    <property type="component" value="Chromosome"/>
</dbReference>
<dbReference type="GO" id="GO:0005829">
    <property type="term" value="C:cytosol"/>
    <property type="evidence" value="ECO:0007669"/>
    <property type="project" value="TreeGrafter"/>
</dbReference>
<dbReference type="GO" id="GO:0047952">
    <property type="term" value="F:glycerol-3-phosphate dehydrogenase [NAD(P)+] activity"/>
    <property type="evidence" value="ECO:0007669"/>
    <property type="project" value="UniProtKB-UniRule"/>
</dbReference>
<dbReference type="GO" id="GO:0051287">
    <property type="term" value="F:NAD binding"/>
    <property type="evidence" value="ECO:0007669"/>
    <property type="project" value="InterPro"/>
</dbReference>
<dbReference type="GO" id="GO:0005975">
    <property type="term" value="P:carbohydrate metabolic process"/>
    <property type="evidence" value="ECO:0007669"/>
    <property type="project" value="InterPro"/>
</dbReference>
<dbReference type="GO" id="GO:0046167">
    <property type="term" value="P:glycerol-3-phosphate biosynthetic process"/>
    <property type="evidence" value="ECO:0007669"/>
    <property type="project" value="UniProtKB-UniRule"/>
</dbReference>
<dbReference type="GO" id="GO:0046168">
    <property type="term" value="P:glycerol-3-phosphate catabolic process"/>
    <property type="evidence" value="ECO:0007669"/>
    <property type="project" value="InterPro"/>
</dbReference>
<dbReference type="GO" id="GO:0006650">
    <property type="term" value="P:glycerophospholipid metabolic process"/>
    <property type="evidence" value="ECO:0007669"/>
    <property type="project" value="UniProtKB-UniRule"/>
</dbReference>
<dbReference type="GO" id="GO:0008654">
    <property type="term" value="P:phospholipid biosynthetic process"/>
    <property type="evidence" value="ECO:0007669"/>
    <property type="project" value="UniProtKB-KW"/>
</dbReference>
<dbReference type="FunFam" id="3.40.50.720:FF:000019">
    <property type="entry name" value="Glycerol-3-phosphate dehydrogenase [NAD(P)+]"/>
    <property type="match status" value="1"/>
</dbReference>
<dbReference type="Gene3D" id="1.10.1040.10">
    <property type="entry name" value="N-(1-d-carboxylethyl)-l-norvaline Dehydrogenase, domain 2"/>
    <property type="match status" value="1"/>
</dbReference>
<dbReference type="Gene3D" id="3.40.50.720">
    <property type="entry name" value="NAD(P)-binding Rossmann-like Domain"/>
    <property type="match status" value="1"/>
</dbReference>
<dbReference type="HAMAP" id="MF_00394">
    <property type="entry name" value="NAD_Glyc3P_dehydrog"/>
    <property type="match status" value="1"/>
</dbReference>
<dbReference type="InterPro" id="IPR008927">
    <property type="entry name" value="6-PGluconate_DH-like_C_sf"/>
</dbReference>
<dbReference type="InterPro" id="IPR013328">
    <property type="entry name" value="6PGD_dom2"/>
</dbReference>
<dbReference type="InterPro" id="IPR006168">
    <property type="entry name" value="G3P_DH_NAD-dep"/>
</dbReference>
<dbReference type="InterPro" id="IPR006109">
    <property type="entry name" value="G3P_DH_NAD-dep_C"/>
</dbReference>
<dbReference type="InterPro" id="IPR011128">
    <property type="entry name" value="G3P_DH_NAD-dep_N"/>
</dbReference>
<dbReference type="InterPro" id="IPR036291">
    <property type="entry name" value="NAD(P)-bd_dom_sf"/>
</dbReference>
<dbReference type="NCBIfam" id="NF000940">
    <property type="entry name" value="PRK00094.1-2"/>
    <property type="match status" value="1"/>
</dbReference>
<dbReference type="NCBIfam" id="NF000942">
    <property type="entry name" value="PRK00094.1-4"/>
    <property type="match status" value="1"/>
</dbReference>
<dbReference type="NCBIfam" id="NF011213">
    <property type="entry name" value="PRK14620.1"/>
    <property type="match status" value="1"/>
</dbReference>
<dbReference type="PANTHER" id="PTHR11728">
    <property type="entry name" value="GLYCEROL-3-PHOSPHATE DEHYDROGENASE"/>
    <property type="match status" value="1"/>
</dbReference>
<dbReference type="PANTHER" id="PTHR11728:SF1">
    <property type="entry name" value="GLYCEROL-3-PHOSPHATE DEHYDROGENASE [NAD(+)] 2, CHLOROPLASTIC"/>
    <property type="match status" value="1"/>
</dbReference>
<dbReference type="Pfam" id="PF07479">
    <property type="entry name" value="NAD_Gly3P_dh_C"/>
    <property type="match status" value="1"/>
</dbReference>
<dbReference type="Pfam" id="PF01210">
    <property type="entry name" value="NAD_Gly3P_dh_N"/>
    <property type="match status" value="1"/>
</dbReference>
<dbReference type="PIRSF" id="PIRSF000114">
    <property type="entry name" value="Glycerol-3-P_dh"/>
    <property type="match status" value="1"/>
</dbReference>
<dbReference type="PRINTS" id="PR00077">
    <property type="entry name" value="GPDHDRGNASE"/>
</dbReference>
<dbReference type="SUPFAM" id="SSF48179">
    <property type="entry name" value="6-phosphogluconate dehydrogenase C-terminal domain-like"/>
    <property type="match status" value="1"/>
</dbReference>
<dbReference type="SUPFAM" id="SSF51735">
    <property type="entry name" value="NAD(P)-binding Rossmann-fold domains"/>
    <property type="match status" value="1"/>
</dbReference>
<dbReference type="PROSITE" id="PS00957">
    <property type="entry name" value="NAD_G3PDH"/>
    <property type="match status" value="1"/>
</dbReference>
<feature type="chain" id="PRO_0000255308" description="Glycerol-3-phosphate dehydrogenase [NAD(P)+]">
    <location>
        <begin position="1"/>
        <end position="324"/>
    </location>
</feature>
<feature type="active site" description="Proton acceptor" evidence="1">
    <location>
        <position position="189"/>
    </location>
</feature>
<feature type="binding site" evidence="1">
    <location>
        <position position="10"/>
    </location>
    <ligand>
        <name>NADPH</name>
        <dbReference type="ChEBI" id="CHEBI:57783"/>
    </ligand>
</feature>
<feature type="binding site" evidence="1">
    <location>
        <position position="11"/>
    </location>
    <ligand>
        <name>NADPH</name>
        <dbReference type="ChEBI" id="CHEBI:57783"/>
    </ligand>
</feature>
<feature type="binding site" evidence="1">
    <location>
        <position position="31"/>
    </location>
    <ligand>
        <name>NADPH</name>
        <dbReference type="ChEBI" id="CHEBI:57783"/>
    </ligand>
</feature>
<feature type="binding site" evidence="1">
    <location>
        <position position="106"/>
    </location>
    <ligand>
        <name>NADPH</name>
        <dbReference type="ChEBI" id="CHEBI:57783"/>
    </ligand>
</feature>
<feature type="binding site" evidence="1">
    <location>
        <position position="106"/>
    </location>
    <ligand>
        <name>sn-glycerol 3-phosphate</name>
        <dbReference type="ChEBI" id="CHEBI:57597"/>
    </ligand>
</feature>
<feature type="binding site" evidence="1">
    <location>
        <position position="134"/>
    </location>
    <ligand>
        <name>sn-glycerol 3-phosphate</name>
        <dbReference type="ChEBI" id="CHEBI:57597"/>
    </ligand>
</feature>
<feature type="binding site" evidence="1">
    <location>
        <position position="136"/>
    </location>
    <ligand>
        <name>sn-glycerol 3-phosphate</name>
        <dbReference type="ChEBI" id="CHEBI:57597"/>
    </ligand>
</feature>
<feature type="binding site" evidence="1">
    <location>
        <position position="138"/>
    </location>
    <ligand>
        <name>NADPH</name>
        <dbReference type="ChEBI" id="CHEBI:57783"/>
    </ligand>
</feature>
<feature type="binding site" evidence="1">
    <location>
        <position position="189"/>
    </location>
    <ligand>
        <name>sn-glycerol 3-phosphate</name>
        <dbReference type="ChEBI" id="CHEBI:57597"/>
    </ligand>
</feature>
<feature type="binding site" evidence="1">
    <location>
        <position position="244"/>
    </location>
    <ligand>
        <name>sn-glycerol 3-phosphate</name>
        <dbReference type="ChEBI" id="CHEBI:57597"/>
    </ligand>
</feature>
<feature type="binding site" evidence="1">
    <location>
        <position position="254"/>
    </location>
    <ligand>
        <name>sn-glycerol 3-phosphate</name>
        <dbReference type="ChEBI" id="CHEBI:57597"/>
    </ligand>
</feature>
<feature type="binding site" evidence="1">
    <location>
        <position position="255"/>
    </location>
    <ligand>
        <name>NADPH</name>
        <dbReference type="ChEBI" id="CHEBI:57783"/>
    </ligand>
</feature>
<feature type="binding site" evidence="1">
    <location>
        <position position="255"/>
    </location>
    <ligand>
        <name>sn-glycerol 3-phosphate</name>
        <dbReference type="ChEBI" id="CHEBI:57597"/>
    </ligand>
</feature>
<feature type="binding site" evidence="1">
    <location>
        <position position="256"/>
    </location>
    <ligand>
        <name>sn-glycerol 3-phosphate</name>
        <dbReference type="ChEBI" id="CHEBI:57597"/>
    </ligand>
</feature>
<feature type="binding site" evidence="1">
    <location>
        <position position="279"/>
    </location>
    <ligand>
        <name>NADPH</name>
        <dbReference type="ChEBI" id="CHEBI:57783"/>
    </ligand>
</feature>
<feature type="binding site" evidence="1">
    <location>
        <position position="281"/>
    </location>
    <ligand>
        <name>NADPH</name>
        <dbReference type="ChEBI" id="CHEBI:57783"/>
    </ligand>
</feature>
<accession>Q3YRF6</accession>
<sequence>MKITILGAGSFGTAIAIALSSISTSINLWGRNHTDMQSITINRKNLKYLPTYELPDNIIPSSSIDEVLSDHNTCIILAVPTQQLRTLCLYVQQHIFEQTPLLICSKGIENISLKFPSEIVKEILPNNPTYILSGPSFAKEIAANLPCTIVLAGENEVLGTSLINKMSNKTFKIVYSKDTLGVQIGAALKNIIAIACGIITGKNLGNNAVASVIAKGMEEIKTLYTAKNETINLSTLIGPSCLGDLILTCTTTHSRNMSFGVAIGQGEDINKMLNKKSEIIEGVSTVKPLISLAEKLNIELPICTSIYNLLYKNVSLDKTISEIL</sequence>
<evidence type="ECO:0000255" key="1">
    <source>
        <dbReference type="HAMAP-Rule" id="MF_00394"/>
    </source>
</evidence>
<comment type="function">
    <text evidence="1">Catalyzes the reduction of the glycolytic intermediate dihydroxyacetone phosphate (DHAP) to sn-glycerol 3-phosphate (G3P), the key precursor for phospholipid synthesis.</text>
</comment>
<comment type="catalytic activity">
    <reaction evidence="1">
        <text>sn-glycerol 3-phosphate + NAD(+) = dihydroxyacetone phosphate + NADH + H(+)</text>
        <dbReference type="Rhea" id="RHEA:11092"/>
        <dbReference type="ChEBI" id="CHEBI:15378"/>
        <dbReference type="ChEBI" id="CHEBI:57540"/>
        <dbReference type="ChEBI" id="CHEBI:57597"/>
        <dbReference type="ChEBI" id="CHEBI:57642"/>
        <dbReference type="ChEBI" id="CHEBI:57945"/>
        <dbReference type="EC" id="1.1.1.94"/>
    </reaction>
    <physiologicalReaction direction="right-to-left" evidence="1">
        <dbReference type="Rhea" id="RHEA:11094"/>
    </physiologicalReaction>
</comment>
<comment type="catalytic activity">
    <reaction evidence="1">
        <text>sn-glycerol 3-phosphate + NADP(+) = dihydroxyacetone phosphate + NADPH + H(+)</text>
        <dbReference type="Rhea" id="RHEA:11096"/>
        <dbReference type="ChEBI" id="CHEBI:15378"/>
        <dbReference type="ChEBI" id="CHEBI:57597"/>
        <dbReference type="ChEBI" id="CHEBI:57642"/>
        <dbReference type="ChEBI" id="CHEBI:57783"/>
        <dbReference type="ChEBI" id="CHEBI:58349"/>
        <dbReference type="EC" id="1.1.1.94"/>
    </reaction>
    <physiologicalReaction direction="right-to-left" evidence="1">
        <dbReference type="Rhea" id="RHEA:11098"/>
    </physiologicalReaction>
</comment>
<comment type="pathway">
    <text evidence="1">Membrane lipid metabolism; glycerophospholipid metabolism.</text>
</comment>
<comment type="subcellular location">
    <subcellularLocation>
        <location evidence="1">Cytoplasm</location>
    </subcellularLocation>
</comment>
<comment type="similarity">
    <text evidence="1">Belongs to the NAD-dependent glycerol-3-phosphate dehydrogenase family.</text>
</comment>
<organism>
    <name type="scientific">Ehrlichia canis (strain Jake)</name>
    <dbReference type="NCBI Taxonomy" id="269484"/>
    <lineage>
        <taxon>Bacteria</taxon>
        <taxon>Pseudomonadati</taxon>
        <taxon>Pseudomonadota</taxon>
        <taxon>Alphaproteobacteria</taxon>
        <taxon>Rickettsiales</taxon>
        <taxon>Anaplasmataceae</taxon>
        <taxon>Ehrlichia</taxon>
    </lineage>
</organism>
<reference key="1">
    <citation type="journal article" date="2006" name="J. Bacteriol.">
        <title>The genome of the obligately intracellular bacterium Ehrlichia canis reveals themes of complex membrane structure and immune evasion strategies.</title>
        <authorList>
            <person name="Mavromatis K."/>
            <person name="Doyle C.K."/>
            <person name="Lykidis A."/>
            <person name="Ivanova N."/>
            <person name="Francino M.P."/>
            <person name="Chain P."/>
            <person name="Shin M."/>
            <person name="Malfatti S."/>
            <person name="Larimer F."/>
            <person name="Copeland A."/>
            <person name="Detter J.C."/>
            <person name="Land M."/>
            <person name="Richardson P.M."/>
            <person name="Yu X.J."/>
            <person name="Walker D.H."/>
            <person name="McBride J.W."/>
            <person name="Kyrpides N.C."/>
        </authorList>
    </citation>
    <scope>NUCLEOTIDE SEQUENCE [LARGE SCALE GENOMIC DNA]</scope>
    <source>
        <strain>Jake</strain>
    </source>
</reference>
<keyword id="KW-0963">Cytoplasm</keyword>
<keyword id="KW-0444">Lipid biosynthesis</keyword>
<keyword id="KW-0443">Lipid metabolism</keyword>
<keyword id="KW-0520">NAD</keyword>
<keyword id="KW-0521">NADP</keyword>
<keyword id="KW-0547">Nucleotide-binding</keyword>
<keyword id="KW-0560">Oxidoreductase</keyword>
<keyword id="KW-0594">Phospholipid biosynthesis</keyword>
<keyword id="KW-1208">Phospholipid metabolism</keyword>
<proteinExistence type="inferred from homology"/>
<name>GPDA_EHRCJ</name>